<evidence type="ECO:0000250" key="1"/>
<evidence type="ECO:0000255" key="2"/>
<evidence type="ECO:0000305" key="3"/>
<keyword id="KW-0445">Lipid transport</keyword>
<keyword id="KW-1185">Reference proteome</keyword>
<keyword id="KW-0732">Signal</keyword>
<keyword id="KW-0813">Transport</keyword>
<gene>
    <name type="primary">NPC2</name>
    <name type="ORF">MGG_01557</name>
</gene>
<accession>Q52FS9</accession>
<accession>A4RKA8</accession>
<accession>G4MTH4</accession>
<comment type="function">
    <text evidence="1">Catalyzes the intermembrane transfer of phosphatidylglycerol and phosphatidylinositol.</text>
</comment>
<comment type="subunit">
    <text evidence="1">Monomer.</text>
</comment>
<comment type="similarity">
    <text evidence="3">Belongs to the NPC2 family.</text>
</comment>
<organism>
    <name type="scientific">Pyricularia oryzae (strain 70-15 / ATCC MYA-4617 / FGSC 8958)</name>
    <name type="common">Rice blast fungus</name>
    <name type="synonym">Magnaporthe oryzae</name>
    <dbReference type="NCBI Taxonomy" id="242507"/>
    <lineage>
        <taxon>Eukaryota</taxon>
        <taxon>Fungi</taxon>
        <taxon>Dikarya</taxon>
        <taxon>Ascomycota</taxon>
        <taxon>Pezizomycotina</taxon>
        <taxon>Sordariomycetes</taxon>
        <taxon>Sordariomycetidae</taxon>
        <taxon>Magnaporthales</taxon>
        <taxon>Pyriculariaceae</taxon>
        <taxon>Pyricularia</taxon>
    </lineage>
</organism>
<reference key="1">
    <citation type="journal article" date="2005" name="Nature">
        <title>The genome sequence of the rice blast fungus Magnaporthe grisea.</title>
        <authorList>
            <person name="Dean R.A."/>
            <person name="Talbot N.J."/>
            <person name="Ebbole D.J."/>
            <person name="Farman M.L."/>
            <person name="Mitchell T.K."/>
            <person name="Orbach M.J."/>
            <person name="Thon M.R."/>
            <person name="Kulkarni R."/>
            <person name="Xu J.-R."/>
            <person name="Pan H."/>
            <person name="Read N.D."/>
            <person name="Lee Y.-H."/>
            <person name="Carbone I."/>
            <person name="Brown D."/>
            <person name="Oh Y.Y."/>
            <person name="Donofrio N."/>
            <person name="Jeong J.S."/>
            <person name="Soanes D.M."/>
            <person name="Djonovic S."/>
            <person name="Kolomiets E."/>
            <person name="Rehmeyer C."/>
            <person name="Li W."/>
            <person name="Harding M."/>
            <person name="Kim S."/>
            <person name="Lebrun M.-H."/>
            <person name="Bohnert H."/>
            <person name="Coughlan S."/>
            <person name="Butler J."/>
            <person name="Calvo S.E."/>
            <person name="Ma L.-J."/>
            <person name="Nicol R."/>
            <person name="Purcell S."/>
            <person name="Nusbaum C."/>
            <person name="Galagan J.E."/>
            <person name="Birren B.W."/>
        </authorList>
    </citation>
    <scope>NUCLEOTIDE SEQUENCE [LARGE SCALE GENOMIC DNA]</scope>
    <source>
        <strain>70-15 / ATCC MYA-4617 / FGSC 8958</strain>
    </source>
</reference>
<dbReference type="EMBL" id="CM001232">
    <property type="protein sequence ID" value="EHA54725.1"/>
    <property type="molecule type" value="Genomic_DNA"/>
</dbReference>
<dbReference type="RefSeq" id="XP_003714532.1">
    <property type="nucleotide sequence ID" value="XM_003714484.1"/>
</dbReference>
<dbReference type="SMR" id="Q52FS9"/>
<dbReference type="FunCoup" id="Q52FS9">
    <property type="interactions" value="106"/>
</dbReference>
<dbReference type="STRING" id="242507.Q52FS9"/>
<dbReference type="EnsemblFungi" id="MGG_01557T0">
    <property type="protein sequence ID" value="MGG_01557T0"/>
    <property type="gene ID" value="MGG_01557"/>
</dbReference>
<dbReference type="GeneID" id="2679503"/>
<dbReference type="KEGG" id="mgr:MGG_01557"/>
<dbReference type="VEuPathDB" id="FungiDB:MGG_01557"/>
<dbReference type="eggNOG" id="KOG4680">
    <property type="taxonomic scope" value="Eukaryota"/>
</dbReference>
<dbReference type="HOGENOM" id="CLU_097982_0_0_1"/>
<dbReference type="InParanoid" id="Q52FS9"/>
<dbReference type="OMA" id="HQTYDLC"/>
<dbReference type="OrthoDB" id="6409159at2759"/>
<dbReference type="Proteomes" id="UP000009058">
    <property type="component" value="Chromosome 2"/>
</dbReference>
<dbReference type="GO" id="GO:0000328">
    <property type="term" value="C:fungal-type vacuole lumen"/>
    <property type="evidence" value="ECO:0007669"/>
    <property type="project" value="EnsemblFungi"/>
</dbReference>
<dbReference type="GO" id="GO:0031210">
    <property type="term" value="F:phosphatidylcholine binding"/>
    <property type="evidence" value="ECO:0007669"/>
    <property type="project" value="EnsemblFungi"/>
</dbReference>
<dbReference type="GO" id="GO:0035091">
    <property type="term" value="F:phosphatidylinositol binding"/>
    <property type="evidence" value="ECO:0007669"/>
    <property type="project" value="EnsemblFungi"/>
</dbReference>
<dbReference type="GO" id="GO:0001786">
    <property type="term" value="F:phosphatidylserine binding"/>
    <property type="evidence" value="ECO:0007669"/>
    <property type="project" value="EnsemblFungi"/>
</dbReference>
<dbReference type="GO" id="GO:0032934">
    <property type="term" value="F:sterol binding"/>
    <property type="evidence" value="ECO:0007669"/>
    <property type="project" value="EnsemblFungi"/>
</dbReference>
<dbReference type="GO" id="GO:0032366">
    <property type="term" value="P:intracellular sterol transport"/>
    <property type="evidence" value="ECO:0007669"/>
    <property type="project" value="EnsemblFungi"/>
</dbReference>
<dbReference type="CDD" id="cd00917">
    <property type="entry name" value="PG-PI_TP"/>
    <property type="match status" value="1"/>
</dbReference>
<dbReference type="FunFam" id="2.60.40.770:FF:000004">
    <property type="entry name" value="Phosphatidylglycerol/phosphatidylinositol transfer protein"/>
    <property type="match status" value="1"/>
</dbReference>
<dbReference type="Gene3D" id="2.60.40.770">
    <property type="match status" value="1"/>
</dbReference>
<dbReference type="InterPro" id="IPR014756">
    <property type="entry name" value="Ig_E-set"/>
</dbReference>
<dbReference type="InterPro" id="IPR003172">
    <property type="entry name" value="ML_dom"/>
</dbReference>
<dbReference type="InterPro" id="IPR033917">
    <property type="entry name" value="ML_PG-PI_TP"/>
</dbReference>
<dbReference type="InterPro" id="IPR039670">
    <property type="entry name" value="NPC2-like"/>
</dbReference>
<dbReference type="PANTHER" id="PTHR11306">
    <property type="entry name" value="NIEMANN PICK TYPE C2 PROTEIN NPC2-RELATED"/>
    <property type="match status" value="1"/>
</dbReference>
<dbReference type="PANTHER" id="PTHR11306:SF0">
    <property type="entry name" value="PHOSPHATIDYLGLYCEROL_PHOSPHATIDYLINOSITOL TRANSFER PROTEIN"/>
    <property type="match status" value="1"/>
</dbReference>
<dbReference type="Pfam" id="PF02221">
    <property type="entry name" value="E1_DerP2_DerF2"/>
    <property type="match status" value="1"/>
</dbReference>
<dbReference type="SMART" id="SM00737">
    <property type="entry name" value="ML"/>
    <property type="match status" value="1"/>
</dbReference>
<dbReference type="SUPFAM" id="SSF81296">
    <property type="entry name" value="E set domains"/>
    <property type="match status" value="1"/>
</dbReference>
<protein>
    <recommendedName>
        <fullName>Phosphatidylglycerol/phosphatidylinositol transfer protein</fullName>
        <shortName>PG/PI-TP</shortName>
    </recommendedName>
</protein>
<name>NPC2_PYRO7</name>
<feature type="signal peptide" evidence="2">
    <location>
        <begin position="1"/>
        <end position="18"/>
    </location>
</feature>
<feature type="propeptide" id="PRO_0000019887" evidence="1">
    <location>
        <begin position="19"/>
        <end position="32"/>
    </location>
</feature>
<feature type="chain" id="PRO_0000019888" description="Phosphatidylglycerol/phosphatidylinositol transfer protein">
    <location>
        <begin position="33"/>
        <end position="178"/>
    </location>
</feature>
<proteinExistence type="inferred from homology"/>
<sequence length="178" mass="19555">MRFSTAFLALLSVGFSSARLQGRDQVPVALDDDHKIPGESPLKLCDGDHKDDILKITKVDLSPNPPKAGESLVIKASGDVTQKIEEGAYINLSVKYGLIRLINTKADLCEQIKNVDLECPIDEGKLDIVKSVDLPNEIPPGKYTVFADVYTKDNKKISCLTAEVRFERNSIATPWGDL</sequence>